<feature type="chain" id="PRO_0000121700" description="tRNA-specific 2-thiouridylase MnmA">
    <location>
        <begin position="1"/>
        <end position="374"/>
    </location>
</feature>
<feature type="region of interest" description="Interaction with target base in tRNA" evidence="1">
    <location>
        <begin position="98"/>
        <end position="100"/>
    </location>
</feature>
<feature type="region of interest" description="Interaction with tRNA" evidence="1">
    <location>
        <begin position="152"/>
        <end position="154"/>
    </location>
</feature>
<feature type="region of interest" description="Interaction with tRNA" evidence="1">
    <location>
        <begin position="316"/>
        <end position="317"/>
    </location>
</feature>
<feature type="active site" description="Nucleophile" evidence="1">
    <location>
        <position position="103"/>
    </location>
</feature>
<feature type="active site" description="Cysteine persulfide intermediate" evidence="1">
    <location>
        <position position="202"/>
    </location>
</feature>
<feature type="binding site" evidence="1">
    <location>
        <begin position="12"/>
        <end position="19"/>
    </location>
    <ligand>
        <name>ATP</name>
        <dbReference type="ChEBI" id="CHEBI:30616"/>
    </ligand>
</feature>
<feature type="binding site" evidence="1">
    <location>
        <position position="38"/>
    </location>
    <ligand>
        <name>ATP</name>
        <dbReference type="ChEBI" id="CHEBI:30616"/>
    </ligand>
</feature>
<feature type="binding site" evidence="1">
    <location>
        <position position="128"/>
    </location>
    <ligand>
        <name>ATP</name>
        <dbReference type="ChEBI" id="CHEBI:30616"/>
    </ligand>
</feature>
<feature type="site" description="Interaction with tRNA" evidence="1">
    <location>
        <position position="129"/>
    </location>
</feature>
<feature type="site" description="Interaction with tRNA" evidence="1">
    <location>
        <position position="349"/>
    </location>
</feature>
<feature type="disulfide bond" description="Alternate" evidence="1">
    <location>
        <begin position="103"/>
        <end position="202"/>
    </location>
</feature>
<comment type="function">
    <text evidence="1">Catalyzes the 2-thiolation of uridine at the wobble position (U34) of tRNA, leading to the formation of s(2)U34.</text>
</comment>
<comment type="catalytic activity">
    <reaction evidence="1">
        <text>S-sulfanyl-L-cysteinyl-[protein] + uridine(34) in tRNA + AH2 + ATP = 2-thiouridine(34) in tRNA + L-cysteinyl-[protein] + A + AMP + diphosphate + H(+)</text>
        <dbReference type="Rhea" id="RHEA:47032"/>
        <dbReference type="Rhea" id="RHEA-COMP:10131"/>
        <dbReference type="Rhea" id="RHEA-COMP:11726"/>
        <dbReference type="Rhea" id="RHEA-COMP:11727"/>
        <dbReference type="Rhea" id="RHEA-COMP:11728"/>
        <dbReference type="ChEBI" id="CHEBI:13193"/>
        <dbReference type="ChEBI" id="CHEBI:15378"/>
        <dbReference type="ChEBI" id="CHEBI:17499"/>
        <dbReference type="ChEBI" id="CHEBI:29950"/>
        <dbReference type="ChEBI" id="CHEBI:30616"/>
        <dbReference type="ChEBI" id="CHEBI:33019"/>
        <dbReference type="ChEBI" id="CHEBI:61963"/>
        <dbReference type="ChEBI" id="CHEBI:65315"/>
        <dbReference type="ChEBI" id="CHEBI:87170"/>
        <dbReference type="ChEBI" id="CHEBI:456215"/>
        <dbReference type="EC" id="2.8.1.13"/>
    </reaction>
</comment>
<comment type="subcellular location">
    <subcellularLocation>
        <location evidence="1">Cytoplasm</location>
    </subcellularLocation>
</comment>
<comment type="similarity">
    <text evidence="1">Belongs to the MnmA/TRMU family.</text>
</comment>
<sequence>MSDNSQKKVIVGMSGGVDSSVSAYLLKQQGYQVEGLFMKNWEEDDDSEYCTAAEDLADAQAVCDKLGIHLHKINFASEYWDNVFEYFLAEYKAGRTPNPDILCNKEIKFKAFLEFADEVLDADYIAMGHYVRRSFPENGEKPQMLRGLDGNKDQSYFLYTLSHEQVARSLFPVGDLEKPEVRRIAEEQGLITAKKKDSTGICFIGERKFTDFLSRYLPAQPGNIESPEGEVLGQHQGLMYHTLGQRKGLHIGGRKGGGGNEEPWFVAEKDLKRNVLIAVQGQDHPMLKSEGLIASQLHWVEREPIRDVVKCTVKTRYRQQDIPCTIIPIDDENIKVIFDEPEIAVTPGQSAVFYQGDVCLGGGIIEKRIKYTQA</sequence>
<accession>Q8CWJ6</accession>
<reference key="1">
    <citation type="submission" date="2002-12" db="EMBL/GenBank/DDBJ databases">
        <title>Complete genome sequence of Vibrio vulnificus CMCP6.</title>
        <authorList>
            <person name="Rhee J.H."/>
            <person name="Kim S.Y."/>
            <person name="Chung S.S."/>
            <person name="Kim J.J."/>
            <person name="Moon Y.H."/>
            <person name="Jeong H."/>
            <person name="Choy H.E."/>
        </authorList>
    </citation>
    <scope>NUCLEOTIDE SEQUENCE [LARGE SCALE GENOMIC DNA]</scope>
    <source>
        <strain>CMCP6</strain>
    </source>
</reference>
<dbReference type="EC" id="2.8.1.13" evidence="1"/>
<dbReference type="EMBL" id="AE016795">
    <property type="protein sequence ID" value="AAO11258.1"/>
    <property type="molecule type" value="Genomic_DNA"/>
</dbReference>
<dbReference type="RefSeq" id="WP_011080745.1">
    <property type="nucleotide sequence ID" value="NC_004459.3"/>
</dbReference>
<dbReference type="SMR" id="Q8CWJ6"/>
<dbReference type="KEGG" id="vvu:VV1_2926"/>
<dbReference type="HOGENOM" id="CLU_035188_1_0_6"/>
<dbReference type="Proteomes" id="UP000002275">
    <property type="component" value="Chromosome 1"/>
</dbReference>
<dbReference type="GO" id="GO:0005737">
    <property type="term" value="C:cytoplasm"/>
    <property type="evidence" value="ECO:0007669"/>
    <property type="project" value="UniProtKB-SubCell"/>
</dbReference>
<dbReference type="GO" id="GO:0005524">
    <property type="term" value="F:ATP binding"/>
    <property type="evidence" value="ECO:0007669"/>
    <property type="project" value="UniProtKB-KW"/>
</dbReference>
<dbReference type="GO" id="GO:0000049">
    <property type="term" value="F:tRNA binding"/>
    <property type="evidence" value="ECO:0007669"/>
    <property type="project" value="UniProtKB-KW"/>
</dbReference>
<dbReference type="GO" id="GO:0103016">
    <property type="term" value="F:tRNA-uridine 2-sulfurtransferase activity"/>
    <property type="evidence" value="ECO:0007669"/>
    <property type="project" value="UniProtKB-EC"/>
</dbReference>
<dbReference type="GO" id="GO:0002143">
    <property type="term" value="P:tRNA wobble position uridine thiolation"/>
    <property type="evidence" value="ECO:0007669"/>
    <property type="project" value="TreeGrafter"/>
</dbReference>
<dbReference type="CDD" id="cd01998">
    <property type="entry name" value="MnmA_TRMU-like"/>
    <property type="match status" value="1"/>
</dbReference>
<dbReference type="FunFam" id="2.30.30.280:FF:000001">
    <property type="entry name" value="tRNA-specific 2-thiouridylase MnmA"/>
    <property type="match status" value="1"/>
</dbReference>
<dbReference type="FunFam" id="2.40.30.10:FF:000023">
    <property type="entry name" value="tRNA-specific 2-thiouridylase MnmA"/>
    <property type="match status" value="1"/>
</dbReference>
<dbReference type="FunFam" id="3.40.50.620:FF:000004">
    <property type="entry name" value="tRNA-specific 2-thiouridylase MnmA"/>
    <property type="match status" value="1"/>
</dbReference>
<dbReference type="Gene3D" id="2.30.30.280">
    <property type="entry name" value="Adenine nucleotide alpha hydrolases-like domains"/>
    <property type="match status" value="1"/>
</dbReference>
<dbReference type="Gene3D" id="3.40.50.620">
    <property type="entry name" value="HUPs"/>
    <property type="match status" value="1"/>
</dbReference>
<dbReference type="Gene3D" id="2.40.30.10">
    <property type="entry name" value="Translation factors"/>
    <property type="match status" value="1"/>
</dbReference>
<dbReference type="HAMAP" id="MF_00144">
    <property type="entry name" value="tRNA_thiouridyl_MnmA"/>
    <property type="match status" value="1"/>
</dbReference>
<dbReference type="InterPro" id="IPR004506">
    <property type="entry name" value="MnmA-like"/>
</dbReference>
<dbReference type="InterPro" id="IPR046885">
    <property type="entry name" value="MnmA-like_C"/>
</dbReference>
<dbReference type="InterPro" id="IPR046884">
    <property type="entry name" value="MnmA-like_central"/>
</dbReference>
<dbReference type="InterPro" id="IPR023382">
    <property type="entry name" value="MnmA-like_central_sf"/>
</dbReference>
<dbReference type="InterPro" id="IPR014729">
    <property type="entry name" value="Rossmann-like_a/b/a_fold"/>
</dbReference>
<dbReference type="NCBIfam" id="NF001138">
    <property type="entry name" value="PRK00143.1"/>
    <property type="match status" value="1"/>
</dbReference>
<dbReference type="NCBIfam" id="TIGR00420">
    <property type="entry name" value="trmU"/>
    <property type="match status" value="1"/>
</dbReference>
<dbReference type="PANTHER" id="PTHR11933:SF5">
    <property type="entry name" value="MITOCHONDRIAL TRNA-SPECIFIC 2-THIOURIDYLASE 1"/>
    <property type="match status" value="1"/>
</dbReference>
<dbReference type="PANTHER" id="PTHR11933">
    <property type="entry name" value="TRNA 5-METHYLAMINOMETHYL-2-THIOURIDYLATE -METHYLTRANSFERASE"/>
    <property type="match status" value="1"/>
</dbReference>
<dbReference type="Pfam" id="PF03054">
    <property type="entry name" value="tRNA_Me_trans"/>
    <property type="match status" value="1"/>
</dbReference>
<dbReference type="Pfam" id="PF20258">
    <property type="entry name" value="tRNA_Me_trans_C"/>
    <property type="match status" value="1"/>
</dbReference>
<dbReference type="Pfam" id="PF20259">
    <property type="entry name" value="tRNA_Me_trans_M"/>
    <property type="match status" value="1"/>
</dbReference>
<dbReference type="SUPFAM" id="SSF52402">
    <property type="entry name" value="Adenine nucleotide alpha hydrolases-like"/>
    <property type="match status" value="1"/>
</dbReference>
<protein>
    <recommendedName>
        <fullName evidence="1">tRNA-specific 2-thiouridylase MnmA</fullName>
        <ecNumber evidence="1">2.8.1.13</ecNumber>
    </recommendedName>
</protein>
<proteinExistence type="inferred from homology"/>
<name>MNMA_VIBVU</name>
<gene>
    <name evidence="1" type="primary">mnmA</name>
    <name type="synonym">trmU</name>
    <name type="ordered locus">VV1_2926</name>
</gene>
<evidence type="ECO:0000255" key="1">
    <source>
        <dbReference type="HAMAP-Rule" id="MF_00144"/>
    </source>
</evidence>
<organism>
    <name type="scientific">Vibrio vulnificus (strain CMCP6)</name>
    <dbReference type="NCBI Taxonomy" id="216895"/>
    <lineage>
        <taxon>Bacteria</taxon>
        <taxon>Pseudomonadati</taxon>
        <taxon>Pseudomonadota</taxon>
        <taxon>Gammaproteobacteria</taxon>
        <taxon>Vibrionales</taxon>
        <taxon>Vibrionaceae</taxon>
        <taxon>Vibrio</taxon>
    </lineage>
</organism>
<keyword id="KW-0067">ATP-binding</keyword>
<keyword id="KW-0963">Cytoplasm</keyword>
<keyword id="KW-1015">Disulfide bond</keyword>
<keyword id="KW-0547">Nucleotide-binding</keyword>
<keyword id="KW-0694">RNA-binding</keyword>
<keyword id="KW-0808">Transferase</keyword>
<keyword id="KW-0819">tRNA processing</keyword>
<keyword id="KW-0820">tRNA-binding</keyword>